<evidence type="ECO:0000255" key="1">
    <source>
        <dbReference type="HAMAP-Rule" id="MF_01702"/>
    </source>
</evidence>
<evidence type="ECO:0000256" key="2">
    <source>
        <dbReference type="SAM" id="MobiDB-lite"/>
    </source>
</evidence>
<protein>
    <recommendedName>
        <fullName evidence="1">Phosphate import ATP-binding protein PstB</fullName>
        <ecNumber evidence="1">7.3.2.1</ecNumber>
    </recommendedName>
    <alternativeName>
        <fullName evidence="1">ABC phosphate transporter</fullName>
    </alternativeName>
    <alternativeName>
        <fullName evidence="1">Phosphate-transporting ATPase</fullName>
    </alternativeName>
</protein>
<sequence length="282" mass="31383">MNMAESHLDPSKLATGPAGAGAATGQRPLAPLNAKIEVKNLNFFYNQFHALKNINLSIPEGKVTAFIGPSGCGKSTLLRTFNKMYALYPEQRAEGEIVMDGENLLQSKLDISLLRARIGMVFQKPTPFPMSIYDNIAFGVKMFERLTRSEMDDRVEWALTKAALWNEVKDKLSQSGYGLSGGQQQRLCIARGIAIRPEVLLLDEPCSALDPISTGRIEELIAELKSDYTVVIVTHNMQQAARCSDYTAYMYLGELIEFGETEKIFIKPARKETEDYITGRFG</sequence>
<comment type="function">
    <text evidence="1">Part of the ABC transporter complex PstSACB involved in phosphate import. Responsible for energy coupling to the transport system.</text>
</comment>
<comment type="catalytic activity">
    <reaction evidence="1">
        <text>phosphate(out) + ATP + H2O = ADP + 2 phosphate(in) + H(+)</text>
        <dbReference type="Rhea" id="RHEA:24440"/>
        <dbReference type="ChEBI" id="CHEBI:15377"/>
        <dbReference type="ChEBI" id="CHEBI:15378"/>
        <dbReference type="ChEBI" id="CHEBI:30616"/>
        <dbReference type="ChEBI" id="CHEBI:43474"/>
        <dbReference type="ChEBI" id="CHEBI:456216"/>
        <dbReference type="EC" id="7.3.2.1"/>
    </reaction>
</comment>
<comment type="subunit">
    <text evidence="1">The complex is composed of two ATP-binding proteins (PstB), two transmembrane proteins (PstC and PstA) and a solute-binding protein (PstS).</text>
</comment>
<comment type="subcellular location">
    <subcellularLocation>
        <location evidence="1">Cell inner membrane</location>
        <topology evidence="1">Peripheral membrane protein</topology>
    </subcellularLocation>
</comment>
<comment type="similarity">
    <text evidence="1">Belongs to the ABC transporter superfamily. Phosphate importer (TC 3.A.1.7) family.</text>
</comment>
<gene>
    <name evidence="1" type="primary">pstB</name>
    <name type="ordered locus">BTH_I2770</name>
</gene>
<accession>Q2SUW7</accession>
<organism>
    <name type="scientific">Burkholderia thailandensis (strain ATCC 700388 / DSM 13276 / CCUG 48851 / CIP 106301 / E264)</name>
    <dbReference type="NCBI Taxonomy" id="271848"/>
    <lineage>
        <taxon>Bacteria</taxon>
        <taxon>Pseudomonadati</taxon>
        <taxon>Pseudomonadota</taxon>
        <taxon>Betaproteobacteria</taxon>
        <taxon>Burkholderiales</taxon>
        <taxon>Burkholderiaceae</taxon>
        <taxon>Burkholderia</taxon>
        <taxon>pseudomallei group</taxon>
    </lineage>
</organism>
<feature type="chain" id="PRO_0000272431" description="Phosphate import ATP-binding protein PstB">
    <location>
        <begin position="1"/>
        <end position="282"/>
    </location>
</feature>
<feature type="domain" description="ABC transporter" evidence="1">
    <location>
        <begin position="36"/>
        <end position="277"/>
    </location>
</feature>
<feature type="region of interest" description="Disordered" evidence="2">
    <location>
        <begin position="1"/>
        <end position="24"/>
    </location>
</feature>
<feature type="compositionally biased region" description="Basic and acidic residues" evidence="2">
    <location>
        <begin position="1"/>
        <end position="10"/>
    </location>
</feature>
<feature type="compositionally biased region" description="Low complexity" evidence="2">
    <location>
        <begin position="14"/>
        <end position="24"/>
    </location>
</feature>
<feature type="binding site" evidence="1">
    <location>
        <begin position="68"/>
        <end position="75"/>
    </location>
    <ligand>
        <name>ATP</name>
        <dbReference type="ChEBI" id="CHEBI:30616"/>
    </ligand>
</feature>
<reference key="1">
    <citation type="journal article" date="2005" name="BMC Genomics">
        <title>Bacterial genome adaptation to niches: divergence of the potential virulence genes in three Burkholderia species of different survival strategies.</title>
        <authorList>
            <person name="Kim H.S."/>
            <person name="Schell M.A."/>
            <person name="Yu Y."/>
            <person name="Ulrich R.L."/>
            <person name="Sarria S.H."/>
            <person name="Nierman W.C."/>
            <person name="DeShazer D."/>
        </authorList>
    </citation>
    <scope>NUCLEOTIDE SEQUENCE [LARGE SCALE GENOMIC DNA]</scope>
    <source>
        <strain>ATCC 700388 / DSM 13276 / CCUG 48851 / CIP 106301 / E264</strain>
    </source>
</reference>
<proteinExistence type="inferred from homology"/>
<dbReference type="EC" id="7.3.2.1" evidence="1"/>
<dbReference type="EMBL" id="CP000086">
    <property type="protein sequence ID" value="ABC37977.1"/>
    <property type="molecule type" value="Genomic_DNA"/>
</dbReference>
<dbReference type="RefSeq" id="WP_009891901.1">
    <property type="nucleotide sequence ID" value="NZ_CP008785.1"/>
</dbReference>
<dbReference type="SMR" id="Q2SUW7"/>
<dbReference type="GeneID" id="45122467"/>
<dbReference type="KEGG" id="bte:BTH_I2770"/>
<dbReference type="HOGENOM" id="CLU_000604_1_22_4"/>
<dbReference type="Proteomes" id="UP000001930">
    <property type="component" value="Chromosome I"/>
</dbReference>
<dbReference type="GO" id="GO:0005886">
    <property type="term" value="C:plasma membrane"/>
    <property type="evidence" value="ECO:0007669"/>
    <property type="project" value="UniProtKB-SubCell"/>
</dbReference>
<dbReference type="GO" id="GO:0005524">
    <property type="term" value="F:ATP binding"/>
    <property type="evidence" value="ECO:0007669"/>
    <property type="project" value="UniProtKB-KW"/>
</dbReference>
<dbReference type="GO" id="GO:0016887">
    <property type="term" value="F:ATP hydrolysis activity"/>
    <property type="evidence" value="ECO:0007669"/>
    <property type="project" value="InterPro"/>
</dbReference>
<dbReference type="GO" id="GO:0015415">
    <property type="term" value="F:ATPase-coupled phosphate ion transmembrane transporter activity"/>
    <property type="evidence" value="ECO:0007669"/>
    <property type="project" value="UniProtKB-EC"/>
</dbReference>
<dbReference type="GO" id="GO:0035435">
    <property type="term" value="P:phosphate ion transmembrane transport"/>
    <property type="evidence" value="ECO:0007669"/>
    <property type="project" value="InterPro"/>
</dbReference>
<dbReference type="CDD" id="cd03260">
    <property type="entry name" value="ABC_PstB_phosphate_transporter"/>
    <property type="match status" value="1"/>
</dbReference>
<dbReference type="FunFam" id="3.40.50.300:FF:000132">
    <property type="entry name" value="Phosphate import ATP-binding protein PstB"/>
    <property type="match status" value="1"/>
</dbReference>
<dbReference type="Gene3D" id="3.40.50.300">
    <property type="entry name" value="P-loop containing nucleotide triphosphate hydrolases"/>
    <property type="match status" value="1"/>
</dbReference>
<dbReference type="InterPro" id="IPR003593">
    <property type="entry name" value="AAA+_ATPase"/>
</dbReference>
<dbReference type="InterPro" id="IPR003439">
    <property type="entry name" value="ABC_transporter-like_ATP-bd"/>
</dbReference>
<dbReference type="InterPro" id="IPR017871">
    <property type="entry name" value="ABC_transporter-like_CS"/>
</dbReference>
<dbReference type="InterPro" id="IPR027417">
    <property type="entry name" value="P-loop_NTPase"/>
</dbReference>
<dbReference type="InterPro" id="IPR005670">
    <property type="entry name" value="PstB-like"/>
</dbReference>
<dbReference type="NCBIfam" id="TIGR00972">
    <property type="entry name" value="3a0107s01c2"/>
    <property type="match status" value="1"/>
</dbReference>
<dbReference type="PANTHER" id="PTHR43423">
    <property type="entry name" value="ABC TRANSPORTER I FAMILY MEMBER 17"/>
    <property type="match status" value="1"/>
</dbReference>
<dbReference type="PANTHER" id="PTHR43423:SF3">
    <property type="entry name" value="PHOSPHATE IMPORT ATP-BINDING PROTEIN PSTB"/>
    <property type="match status" value="1"/>
</dbReference>
<dbReference type="Pfam" id="PF00005">
    <property type="entry name" value="ABC_tran"/>
    <property type="match status" value="1"/>
</dbReference>
<dbReference type="SMART" id="SM00382">
    <property type="entry name" value="AAA"/>
    <property type="match status" value="1"/>
</dbReference>
<dbReference type="SUPFAM" id="SSF52540">
    <property type="entry name" value="P-loop containing nucleoside triphosphate hydrolases"/>
    <property type="match status" value="1"/>
</dbReference>
<dbReference type="PROSITE" id="PS00211">
    <property type="entry name" value="ABC_TRANSPORTER_1"/>
    <property type="match status" value="1"/>
</dbReference>
<dbReference type="PROSITE" id="PS50893">
    <property type="entry name" value="ABC_TRANSPORTER_2"/>
    <property type="match status" value="1"/>
</dbReference>
<dbReference type="PROSITE" id="PS51238">
    <property type="entry name" value="PSTB"/>
    <property type="match status" value="1"/>
</dbReference>
<keyword id="KW-0067">ATP-binding</keyword>
<keyword id="KW-0997">Cell inner membrane</keyword>
<keyword id="KW-1003">Cell membrane</keyword>
<keyword id="KW-0472">Membrane</keyword>
<keyword id="KW-0547">Nucleotide-binding</keyword>
<keyword id="KW-0592">Phosphate transport</keyword>
<keyword id="KW-1278">Translocase</keyword>
<keyword id="KW-0813">Transport</keyword>
<name>PSTB_BURTA</name>